<proteinExistence type="inferred from homology"/>
<sequence length="235" mass="25370">MAKDTTGRMRVTVKSAGRMKLSSKLWLERQLNDPYVAQAKRDGYRSRAAYKLLEIDDKYHFLKSGLAVADLGAAPGGWSQIAAKRVGAPDGRGKVIAIDLLEMGEIPGVTFAQLDFLDDAAPDRLREMLGGGADVVMSDMAANTTGHRKTDQLRIVGLVESAAQFASEVLKPGGTFVAKVFQSGADATLMTQLKRDFATVKHVKPAASRKDSSERYVLAMGFRGVPIVAPETVDE</sequence>
<protein>
    <recommendedName>
        <fullName evidence="1">Ribosomal RNA large subunit methyltransferase E</fullName>
        <ecNumber evidence="1">2.1.1.166</ecNumber>
    </recommendedName>
    <alternativeName>
        <fullName evidence="1">23S rRNA Um2552 methyltransferase</fullName>
    </alternativeName>
    <alternativeName>
        <fullName evidence="1">rRNA (uridine-2'-O-)-methyltransferase</fullName>
    </alternativeName>
</protein>
<name>RLME_RHOPS</name>
<organism>
    <name type="scientific">Rhodopseudomonas palustris (strain BisB5)</name>
    <dbReference type="NCBI Taxonomy" id="316057"/>
    <lineage>
        <taxon>Bacteria</taxon>
        <taxon>Pseudomonadati</taxon>
        <taxon>Pseudomonadota</taxon>
        <taxon>Alphaproteobacteria</taxon>
        <taxon>Hyphomicrobiales</taxon>
        <taxon>Nitrobacteraceae</taxon>
        <taxon>Rhodopseudomonas</taxon>
    </lineage>
</organism>
<accession>Q138J5</accession>
<evidence type="ECO:0000255" key="1">
    <source>
        <dbReference type="HAMAP-Rule" id="MF_01547"/>
    </source>
</evidence>
<gene>
    <name evidence="1" type="primary">rlmE</name>
    <name evidence="1" type="synonym">ftsJ</name>
    <name evidence="1" type="synonym">rrmJ</name>
    <name type="ordered locus">RPD_2259</name>
</gene>
<reference key="1">
    <citation type="submission" date="2006-03" db="EMBL/GenBank/DDBJ databases">
        <title>Complete sequence of Rhodopseudomonas palustris BisB5.</title>
        <authorList>
            <consortium name="US DOE Joint Genome Institute"/>
            <person name="Copeland A."/>
            <person name="Lucas S."/>
            <person name="Lapidus A."/>
            <person name="Barry K."/>
            <person name="Detter J.C."/>
            <person name="Glavina del Rio T."/>
            <person name="Hammon N."/>
            <person name="Israni S."/>
            <person name="Dalin E."/>
            <person name="Tice H."/>
            <person name="Pitluck S."/>
            <person name="Chain P."/>
            <person name="Malfatti S."/>
            <person name="Shin M."/>
            <person name="Vergez L."/>
            <person name="Schmutz J."/>
            <person name="Larimer F."/>
            <person name="Land M."/>
            <person name="Hauser L."/>
            <person name="Pelletier D.A."/>
            <person name="Kyrpides N."/>
            <person name="Lykidis A."/>
            <person name="Oda Y."/>
            <person name="Harwood C.S."/>
            <person name="Richardson P."/>
        </authorList>
    </citation>
    <scope>NUCLEOTIDE SEQUENCE [LARGE SCALE GENOMIC DNA]</scope>
    <source>
        <strain>BisB5</strain>
    </source>
</reference>
<keyword id="KW-0963">Cytoplasm</keyword>
<keyword id="KW-0489">Methyltransferase</keyword>
<keyword id="KW-0698">rRNA processing</keyword>
<keyword id="KW-0949">S-adenosyl-L-methionine</keyword>
<keyword id="KW-0808">Transferase</keyword>
<comment type="function">
    <text evidence="1">Specifically methylates the uridine in position 2552 of 23S rRNA at the 2'-O position of the ribose in the fully assembled 50S ribosomal subunit.</text>
</comment>
<comment type="catalytic activity">
    <reaction evidence="1">
        <text>uridine(2552) in 23S rRNA + S-adenosyl-L-methionine = 2'-O-methyluridine(2552) in 23S rRNA + S-adenosyl-L-homocysteine + H(+)</text>
        <dbReference type="Rhea" id="RHEA:42720"/>
        <dbReference type="Rhea" id="RHEA-COMP:10202"/>
        <dbReference type="Rhea" id="RHEA-COMP:10203"/>
        <dbReference type="ChEBI" id="CHEBI:15378"/>
        <dbReference type="ChEBI" id="CHEBI:57856"/>
        <dbReference type="ChEBI" id="CHEBI:59789"/>
        <dbReference type="ChEBI" id="CHEBI:65315"/>
        <dbReference type="ChEBI" id="CHEBI:74478"/>
        <dbReference type="EC" id="2.1.1.166"/>
    </reaction>
</comment>
<comment type="subcellular location">
    <subcellularLocation>
        <location evidence="1">Cytoplasm</location>
    </subcellularLocation>
</comment>
<comment type="similarity">
    <text evidence="1">Belongs to the class I-like SAM-binding methyltransferase superfamily. RNA methyltransferase RlmE family.</text>
</comment>
<dbReference type="EC" id="2.1.1.166" evidence="1"/>
<dbReference type="EMBL" id="CP000283">
    <property type="protein sequence ID" value="ABE39494.1"/>
    <property type="molecule type" value="Genomic_DNA"/>
</dbReference>
<dbReference type="SMR" id="Q138J5"/>
<dbReference type="STRING" id="316057.RPD_2259"/>
<dbReference type="KEGG" id="rpd:RPD_2259"/>
<dbReference type="eggNOG" id="COG0293">
    <property type="taxonomic scope" value="Bacteria"/>
</dbReference>
<dbReference type="HOGENOM" id="CLU_009422_4_0_5"/>
<dbReference type="BioCyc" id="RPAL316057:RPD_RS11340-MONOMER"/>
<dbReference type="Proteomes" id="UP000001818">
    <property type="component" value="Chromosome"/>
</dbReference>
<dbReference type="GO" id="GO:0005737">
    <property type="term" value="C:cytoplasm"/>
    <property type="evidence" value="ECO:0007669"/>
    <property type="project" value="UniProtKB-SubCell"/>
</dbReference>
<dbReference type="GO" id="GO:0008650">
    <property type="term" value="F:rRNA (uridine-2'-O-)-methyltransferase activity"/>
    <property type="evidence" value="ECO:0007669"/>
    <property type="project" value="UniProtKB-UniRule"/>
</dbReference>
<dbReference type="FunFam" id="3.40.50.150:FF:000005">
    <property type="entry name" value="Ribosomal RNA large subunit methyltransferase E"/>
    <property type="match status" value="1"/>
</dbReference>
<dbReference type="Gene3D" id="3.40.50.150">
    <property type="entry name" value="Vaccinia Virus protein VP39"/>
    <property type="match status" value="1"/>
</dbReference>
<dbReference type="HAMAP" id="MF_01547">
    <property type="entry name" value="RNA_methyltr_E"/>
    <property type="match status" value="1"/>
</dbReference>
<dbReference type="InterPro" id="IPR050082">
    <property type="entry name" value="RNA_methyltr_RlmE"/>
</dbReference>
<dbReference type="InterPro" id="IPR002877">
    <property type="entry name" value="RNA_MeTrfase_FtsJ_dom"/>
</dbReference>
<dbReference type="InterPro" id="IPR015507">
    <property type="entry name" value="rRNA-MeTfrase_E"/>
</dbReference>
<dbReference type="InterPro" id="IPR029063">
    <property type="entry name" value="SAM-dependent_MTases_sf"/>
</dbReference>
<dbReference type="PANTHER" id="PTHR10920">
    <property type="entry name" value="RIBOSOMAL RNA METHYLTRANSFERASE"/>
    <property type="match status" value="1"/>
</dbReference>
<dbReference type="PANTHER" id="PTHR10920:SF18">
    <property type="entry name" value="RRNA METHYLTRANSFERASE 2, MITOCHONDRIAL"/>
    <property type="match status" value="1"/>
</dbReference>
<dbReference type="Pfam" id="PF01728">
    <property type="entry name" value="FtsJ"/>
    <property type="match status" value="1"/>
</dbReference>
<dbReference type="PIRSF" id="PIRSF005461">
    <property type="entry name" value="23S_rRNA_mtase"/>
    <property type="match status" value="1"/>
</dbReference>
<dbReference type="SUPFAM" id="SSF53335">
    <property type="entry name" value="S-adenosyl-L-methionine-dependent methyltransferases"/>
    <property type="match status" value="1"/>
</dbReference>
<feature type="chain" id="PRO_0000282788" description="Ribosomal RNA large subunit methyltransferase E">
    <location>
        <begin position="1"/>
        <end position="235"/>
    </location>
</feature>
<feature type="active site" description="Proton acceptor" evidence="1">
    <location>
        <position position="179"/>
    </location>
</feature>
<feature type="binding site" evidence="1">
    <location>
        <position position="76"/>
    </location>
    <ligand>
        <name>S-adenosyl-L-methionine</name>
        <dbReference type="ChEBI" id="CHEBI:59789"/>
    </ligand>
</feature>
<feature type="binding site" evidence="1">
    <location>
        <position position="78"/>
    </location>
    <ligand>
        <name>S-adenosyl-L-methionine</name>
        <dbReference type="ChEBI" id="CHEBI:59789"/>
    </ligand>
</feature>
<feature type="binding site" evidence="1">
    <location>
        <position position="99"/>
    </location>
    <ligand>
        <name>S-adenosyl-L-methionine</name>
        <dbReference type="ChEBI" id="CHEBI:59789"/>
    </ligand>
</feature>
<feature type="binding site" evidence="1">
    <location>
        <position position="115"/>
    </location>
    <ligand>
        <name>S-adenosyl-L-methionine</name>
        <dbReference type="ChEBI" id="CHEBI:59789"/>
    </ligand>
</feature>
<feature type="binding site" evidence="1">
    <location>
        <position position="139"/>
    </location>
    <ligand>
        <name>S-adenosyl-L-methionine</name>
        <dbReference type="ChEBI" id="CHEBI:59789"/>
    </ligand>
</feature>